<sequence>MKFNELNLSADLLAEIEKAGFVEASPIQEQTIPLALEGKDVIGQAQTGTGKTAAFGLPTLEKIRTEEATIQALVIAPTRELAVQSQEELFRFGRSKGVKVRSVYGGSSIEKQIKALKSGAHIVVGTPGRLLDLIKRKALKLQDIETLILDEADEMLNMGFLEDIEAIISRVPENRQTLLFSATMPDAIKRIGVQFMKAPEHVKIAAKELTTELVDQYYIRVKEQEKFDTMTRLMDVAQPELAIVFGRTKRRVDELTRGLKIRGFRAEGIHGDLDQNKRLRVLRDFKNGNLDVLVATDVAARGLDISGVTHVYNYDIPQDPESYVHRIGRTGRAGKSGQSITFVAPNEMGYLQIIENLTKKRMKGLKPASVEESFQSKKQVALKKIERDFADETIRANFEKFGKDARKLAAEFTPEELAMYILSLTVQDPDSLPEVEIAREKPLPFKPSGNGFGGKAKGGRGGRRGDDRRERDRRGNGRRDEFKKGSRGNDRFDKEKRYRKDNKKPRNTLSEKQTGFVIRNKGDK</sequence>
<feature type="chain" id="PRO_0000055120" description="DEAD-box ATP-dependent RNA helicase CshA">
    <location>
        <begin position="1"/>
        <end position="524"/>
    </location>
</feature>
<feature type="domain" description="Helicase ATP-binding" evidence="1">
    <location>
        <begin position="32"/>
        <end position="202"/>
    </location>
</feature>
<feature type="domain" description="Helicase C-terminal" evidence="1">
    <location>
        <begin position="213"/>
        <end position="373"/>
    </location>
</feature>
<feature type="region of interest" description="Disordered" evidence="2">
    <location>
        <begin position="440"/>
        <end position="524"/>
    </location>
</feature>
<feature type="short sequence motif" description="Q motif">
    <location>
        <begin position="1"/>
        <end position="29"/>
    </location>
</feature>
<feature type="short sequence motif" description="DEAD box">
    <location>
        <begin position="150"/>
        <end position="153"/>
    </location>
</feature>
<feature type="compositionally biased region" description="Basic and acidic residues" evidence="2">
    <location>
        <begin position="463"/>
        <end position="498"/>
    </location>
</feature>
<feature type="binding site" evidence="1">
    <location>
        <begin position="45"/>
        <end position="52"/>
    </location>
    <ligand>
        <name>ATP</name>
        <dbReference type="ChEBI" id="CHEBI:30616"/>
    </ligand>
</feature>
<feature type="sequence conflict" description="In Ref. 2; AAA26885." evidence="3" ref="2">
    <original>K</original>
    <variation>R</variation>
    <location>
        <position position="203"/>
    </location>
</feature>
<proteinExistence type="inferred from homology"/>
<reference key="1">
    <citation type="journal article" date="2001" name="J. Bacteriol.">
        <title>Genome of the bacterium Streptococcus pneumoniae strain R6.</title>
        <authorList>
            <person name="Hoskins J."/>
            <person name="Alborn W.E. Jr."/>
            <person name="Arnold J."/>
            <person name="Blaszczak L.C."/>
            <person name="Burgett S."/>
            <person name="DeHoff B.S."/>
            <person name="Estrem S.T."/>
            <person name="Fritz L."/>
            <person name="Fu D.-J."/>
            <person name="Fuller W."/>
            <person name="Geringer C."/>
            <person name="Gilmour R."/>
            <person name="Glass J.S."/>
            <person name="Khoja H."/>
            <person name="Kraft A.R."/>
            <person name="Lagace R.E."/>
            <person name="LeBlanc D.J."/>
            <person name="Lee L.N."/>
            <person name="Lefkowitz E.J."/>
            <person name="Lu J."/>
            <person name="Matsushima P."/>
            <person name="McAhren S.M."/>
            <person name="McHenney M."/>
            <person name="McLeaster K."/>
            <person name="Mundy C.W."/>
            <person name="Nicas T.I."/>
            <person name="Norris F.H."/>
            <person name="O'Gara M."/>
            <person name="Peery R.B."/>
            <person name="Robertson G.T."/>
            <person name="Rockey P."/>
            <person name="Sun P.-M."/>
            <person name="Winkler M.E."/>
            <person name="Yang Y."/>
            <person name="Young-Bellido M."/>
            <person name="Zhao G."/>
            <person name="Zook C.A."/>
            <person name="Baltz R.H."/>
            <person name="Jaskunas S.R."/>
            <person name="Rosteck P.R. Jr."/>
            <person name="Skatrud P.L."/>
            <person name="Glass J.I."/>
        </authorList>
    </citation>
    <scope>NUCLEOTIDE SEQUENCE [LARGE SCALE GENOMIC DNA]</scope>
    <source>
        <strain>ATCC BAA-255 / R6</strain>
    </source>
</reference>
<reference key="2">
    <citation type="journal article" date="1993" name="Mol. Microbiol.">
        <title>Genetic identification of exported proteins in Streptococcus pneumoniae.</title>
        <authorList>
            <person name="Pearce B.J."/>
            <person name="Yin Y.B."/>
            <person name="Masure H.R."/>
        </authorList>
    </citation>
    <scope>NUCLEOTIDE SEQUENCE [GENOMIC DNA] OF 107-219</scope>
    <scope>SUBCELLULAR LOCATION</scope>
</reference>
<evidence type="ECO:0000255" key="1">
    <source>
        <dbReference type="HAMAP-Rule" id="MF_01493"/>
    </source>
</evidence>
<evidence type="ECO:0000256" key="2">
    <source>
        <dbReference type="SAM" id="MobiDB-lite"/>
    </source>
</evidence>
<evidence type="ECO:0000305" key="3"/>
<evidence type="ECO:0000305" key="4">
    <source>
    </source>
</evidence>
<gene>
    <name evidence="1" type="primary">cshA</name>
    <name type="synonym">exp9</name>
    <name type="ordered locus">spr1440</name>
</gene>
<organism>
    <name type="scientific">Streptococcus pneumoniae (strain ATCC BAA-255 / R6)</name>
    <dbReference type="NCBI Taxonomy" id="171101"/>
    <lineage>
        <taxon>Bacteria</taxon>
        <taxon>Bacillati</taxon>
        <taxon>Bacillota</taxon>
        <taxon>Bacilli</taxon>
        <taxon>Lactobacillales</taxon>
        <taxon>Streptococcaceae</taxon>
        <taxon>Streptococcus</taxon>
    </lineage>
</organism>
<name>CSHA_STRR6</name>
<protein>
    <recommendedName>
        <fullName evidence="1">DEAD-box ATP-dependent RNA helicase CshA</fullName>
        <ecNumber evidence="1">3.6.4.13</ecNumber>
    </recommendedName>
    <alternativeName>
        <fullName>Exported protein 9</fullName>
    </alternativeName>
</protein>
<keyword id="KW-0067">ATP-binding</keyword>
<keyword id="KW-1003">Cell membrane</keyword>
<keyword id="KW-0963">Cytoplasm</keyword>
<keyword id="KW-0347">Helicase</keyword>
<keyword id="KW-0378">Hydrolase</keyword>
<keyword id="KW-0472">Membrane</keyword>
<keyword id="KW-0547">Nucleotide-binding</keyword>
<keyword id="KW-1185">Reference proteome</keyword>
<keyword id="KW-0694">RNA-binding</keyword>
<keyword id="KW-0346">Stress response</keyword>
<accession>P0A4D8</accession>
<accession>P35599</accession>
<dbReference type="EC" id="3.6.4.13" evidence="1"/>
<dbReference type="EMBL" id="AE007317">
    <property type="protein sequence ID" value="AAL00244.1"/>
    <property type="molecule type" value="Genomic_DNA"/>
</dbReference>
<dbReference type="EMBL" id="L20563">
    <property type="protein sequence ID" value="AAA26885.1"/>
    <property type="molecule type" value="Genomic_DNA"/>
</dbReference>
<dbReference type="PIR" id="G98051">
    <property type="entry name" value="G98051"/>
</dbReference>
<dbReference type="RefSeq" id="NP_359033.1">
    <property type="nucleotide sequence ID" value="NC_003098.1"/>
</dbReference>
<dbReference type="RefSeq" id="WP_000671113.1">
    <property type="nucleotide sequence ID" value="NC_003098.1"/>
</dbReference>
<dbReference type="SMR" id="P0A4D8"/>
<dbReference type="STRING" id="171101.spr1440"/>
<dbReference type="KEGG" id="spr:spr1440"/>
<dbReference type="PATRIC" id="fig|171101.6.peg.1556"/>
<dbReference type="eggNOG" id="COG0513">
    <property type="taxonomic scope" value="Bacteria"/>
</dbReference>
<dbReference type="HOGENOM" id="CLU_003041_21_0_9"/>
<dbReference type="Proteomes" id="UP000000586">
    <property type="component" value="Chromosome"/>
</dbReference>
<dbReference type="GO" id="GO:0005829">
    <property type="term" value="C:cytosol"/>
    <property type="evidence" value="ECO:0000318"/>
    <property type="project" value="GO_Central"/>
</dbReference>
<dbReference type="GO" id="GO:0005886">
    <property type="term" value="C:plasma membrane"/>
    <property type="evidence" value="ECO:0007669"/>
    <property type="project" value="UniProtKB-SubCell"/>
</dbReference>
<dbReference type="GO" id="GO:0005524">
    <property type="term" value="F:ATP binding"/>
    <property type="evidence" value="ECO:0007669"/>
    <property type="project" value="UniProtKB-UniRule"/>
</dbReference>
<dbReference type="GO" id="GO:0016887">
    <property type="term" value="F:ATP hydrolysis activity"/>
    <property type="evidence" value="ECO:0007669"/>
    <property type="project" value="RHEA"/>
</dbReference>
<dbReference type="GO" id="GO:0003724">
    <property type="term" value="F:RNA helicase activity"/>
    <property type="evidence" value="ECO:0000318"/>
    <property type="project" value="GO_Central"/>
</dbReference>
<dbReference type="GO" id="GO:0033592">
    <property type="term" value="F:RNA strand annealing activity"/>
    <property type="evidence" value="ECO:0000318"/>
    <property type="project" value="GO_Central"/>
</dbReference>
<dbReference type="GO" id="GO:0009409">
    <property type="term" value="P:response to cold"/>
    <property type="evidence" value="ECO:0000318"/>
    <property type="project" value="GO_Central"/>
</dbReference>
<dbReference type="GO" id="GO:0006401">
    <property type="term" value="P:RNA catabolic process"/>
    <property type="evidence" value="ECO:0007669"/>
    <property type="project" value="UniProtKB-UniRule"/>
</dbReference>
<dbReference type="CDD" id="cd00268">
    <property type="entry name" value="DEADc"/>
    <property type="match status" value="1"/>
</dbReference>
<dbReference type="CDD" id="cd18787">
    <property type="entry name" value="SF2_C_DEAD"/>
    <property type="match status" value="1"/>
</dbReference>
<dbReference type="FunFam" id="3.40.50.300:FF:000108">
    <property type="entry name" value="ATP-dependent RNA helicase RhlE"/>
    <property type="match status" value="1"/>
</dbReference>
<dbReference type="Gene3D" id="3.40.50.300">
    <property type="entry name" value="P-loop containing nucleotide triphosphate hydrolases"/>
    <property type="match status" value="2"/>
</dbReference>
<dbReference type="HAMAP" id="MF_01493">
    <property type="entry name" value="DEAD_helicase_CshA"/>
    <property type="match status" value="1"/>
</dbReference>
<dbReference type="InterPro" id="IPR011545">
    <property type="entry name" value="DEAD/DEAH_box_helicase_dom"/>
</dbReference>
<dbReference type="InterPro" id="IPR050547">
    <property type="entry name" value="DEAD_box_RNA_helicases"/>
</dbReference>
<dbReference type="InterPro" id="IPR030880">
    <property type="entry name" value="DEAD_helicase_CshA"/>
</dbReference>
<dbReference type="InterPro" id="IPR014001">
    <property type="entry name" value="Helicase_ATP-bd"/>
</dbReference>
<dbReference type="InterPro" id="IPR001650">
    <property type="entry name" value="Helicase_C-like"/>
</dbReference>
<dbReference type="InterPro" id="IPR027417">
    <property type="entry name" value="P-loop_NTPase"/>
</dbReference>
<dbReference type="InterPro" id="IPR000629">
    <property type="entry name" value="RNA-helicase_DEAD-box_CS"/>
</dbReference>
<dbReference type="InterPro" id="IPR014014">
    <property type="entry name" value="RNA_helicase_DEAD_Q_motif"/>
</dbReference>
<dbReference type="PANTHER" id="PTHR47963">
    <property type="entry name" value="DEAD-BOX ATP-DEPENDENT RNA HELICASE 47, MITOCHONDRIAL"/>
    <property type="match status" value="1"/>
</dbReference>
<dbReference type="PANTHER" id="PTHR47963:SF5">
    <property type="entry name" value="DEAD-BOX ATP-DEPENDENT RNA HELICASE CSHA"/>
    <property type="match status" value="1"/>
</dbReference>
<dbReference type="Pfam" id="PF00270">
    <property type="entry name" value="DEAD"/>
    <property type="match status" value="1"/>
</dbReference>
<dbReference type="Pfam" id="PF00271">
    <property type="entry name" value="Helicase_C"/>
    <property type="match status" value="1"/>
</dbReference>
<dbReference type="SMART" id="SM00487">
    <property type="entry name" value="DEXDc"/>
    <property type="match status" value="1"/>
</dbReference>
<dbReference type="SMART" id="SM00490">
    <property type="entry name" value="HELICc"/>
    <property type="match status" value="1"/>
</dbReference>
<dbReference type="SUPFAM" id="SSF52540">
    <property type="entry name" value="P-loop containing nucleoside triphosphate hydrolases"/>
    <property type="match status" value="1"/>
</dbReference>
<dbReference type="PROSITE" id="PS00039">
    <property type="entry name" value="DEAD_ATP_HELICASE"/>
    <property type="match status" value="1"/>
</dbReference>
<dbReference type="PROSITE" id="PS51192">
    <property type="entry name" value="HELICASE_ATP_BIND_1"/>
    <property type="match status" value="1"/>
</dbReference>
<dbReference type="PROSITE" id="PS51194">
    <property type="entry name" value="HELICASE_CTER"/>
    <property type="match status" value="1"/>
</dbReference>
<dbReference type="PROSITE" id="PS51195">
    <property type="entry name" value="Q_MOTIF"/>
    <property type="match status" value="1"/>
</dbReference>
<comment type="function">
    <text evidence="1">DEAD-box RNA helicase possibly involved in RNA degradation. Unwinds dsRNA in both 5'- and 3'-directions, has RNA-dependent ATPase activity.</text>
</comment>
<comment type="catalytic activity">
    <reaction evidence="1">
        <text>ATP + H2O = ADP + phosphate + H(+)</text>
        <dbReference type="Rhea" id="RHEA:13065"/>
        <dbReference type="ChEBI" id="CHEBI:15377"/>
        <dbReference type="ChEBI" id="CHEBI:15378"/>
        <dbReference type="ChEBI" id="CHEBI:30616"/>
        <dbReference type="ChEBI" id="CHEBI:43474"/>
        <dbReference type="ChEBI" id="CHEBI:456216"/>
        <dbReference type="EC" id="3.6.4.13"/>
    </reaction>
</comment>
<comment type="subunit">
    <text evidence="1">Oligomerizes, may be a member of the RNA degradosome.</text>
</comment>
<comment type="subcellular location">
    <subcellularLocation>
        <location evidence="1">Cytoplasm</location>
    </subcellularLocation>
    <subcellularLocation>
        <location evidence="3">Cell membrane</location>
        <topology evidence="3">Peripheral membrane protein</topology>
    </subcellularLocation>
</comment>
<comment type="similarity">
    <text evidence="1">Belongs to the DEAD box helicase family. CshA subfamily.</text>
</comment>
<comment type="caution">
    <text evidence="4">Has been suggested to be found on the cell surface, but its function as an RNA helicase makes this dubious.</text>
</comment>